<gene>
    <name evidence="1" type="primary">E7</name>
</gene>
<organism>
    <name type="scientific">Human papillomavirus type 26</name>
    <dbReference type="NCBI Taxonomy" id="333762"/>
    <lineage>
        <taxon>Viruses</taxon>
        <taxon>Monodnaviria</taxon>
        <taxon>Shotokuvirae</taxon>
        <taxon>Cossaviricota</taxon>
        <taxon>Papovaviricetes</taxon>
        <taxon>Zurhausenvirales</taxon>
        <taxon>Papillomaviridae</taxon>
        <taxon>Firstpapillomavirinae</taxon>
        <taxon>Alphapapillomavirus</taxon>
        <taxon>Alphapapillomavirus 5</taxon>
    </lineage>
</organism>
<sequence length="104" mass="11998">MHGNIINIEDVILDLVPQPEIDLRCYEQLDYEQFDSSDEDETDNMRDQQARQAGQEVCYRIEAQCCMCNSIVQLAVQSSRQNVRVLEQMLMEDVSLVCHQCAAQ</sequence>
<protein>
    <recommendedName>
        <fullName evidence="1">Protein E7</fullName>
    </recommendedName>
</protein>
<reference key="1">
    <citation type="journal article" date="1994" name="Curr. Top. Microbiol. Immunol.">
        <title>Primer-directed sequencing of human papillomavirus types.</title>
        <authorList>
            <person name="Delius H."/>
            <person name="Hofmann B."/>
        </authorList>
    </citation>
    <scope>NUCLEOTIDE SEQUENCE [GENOMIC DNA]</scope>
</reference>
<reference key="2">
    <citation type="journal article" date="2002" name="Rev. Med. Virol.">
        <title>Interactions of SV40 large T antigen and other viral proteins with retinoblastoma tumour suppressor.</title>
        <authorList>
            <person name="Lee C."/>
            <person name="Cho Y."/>
        </authorList>
    </citation>
    <scope>REVIEW</scope>
</reference>
<comment type="function">
    <text evidence="1">Plays a role in viral genome replication by driving entry of quiescent cells into the cell cycle. Stimulation of progression from G1 to S phase allows the virus to efficiently use the cellular DNA replicating machinery to achieve viral genome replication. E7 protein has both transforming and trans-activating activities. Induces the disassembly of the E2F1 transcription factor from RB1, with subsequent transcriptional activation of E2F1-regulated S-phase genes. Interferes with host histone deacetylation mediated by HDAC1 and HDAC2, leading to transcription activation. Also plays a role in the inhibition of both antiviral and antiproliferative functions of host interferon alpha. Interaction with host TMEM173/STING impairs the ability of TMEM173/STING to sense cytosolic DNA and promote the production of type I interferon (IFN-alpha and IFN-beta).</text>
</comment>
<comment type="subunit">
    <text evidence="1">Homodimer. Homooligomer. Interacts with host RB1; this interaction induces dissociation of RB1-E2F1 complex thereby disrupting RB1 activity. Interacts with host EP300; this interaction represses EP300 transcriptional activity. Interacts with protein E2; this interaction inhibits E7 oncogenic activity. Interacts with host TMEM173/STING; this interaction impairs the ability of TMEM173/STING to sense cytosolic DNA and promote the production of type I interferon (IFN-alpha and IFN-beta).</text>
</comment>
<comment type="subcellular location">
    <subcellularLocation>
        <location evidence="1">Host cytoplasm</location>
    </subcellularLocation>
    <subcellularLocation>
        <location evidence="1">Host nucleus</location>
    </subcellularLocation>
    <text evidence="1">Predominantly found in the host nucleus.</text>
</comment>
<comment type="domain">
    <text evidence="1">The E7 terminal domain is an intrinsically disordered domain, whose flexibility and conformational transitions confer target adaptability to the oncoprotein. It allows adaptation to a variety of protein targets and exposes the PEST degradation sequence that regulates its turnover in the cell.</text>
</comment>
<comment type="PTM">
    <text evidence="1">Highly phosphorylated.</text>
</comment>
<comment type="similarity">
    <text evidence="1">Belongs to the papillomaviridae E7 protein family.</text>
</comment>
<feature type="chain" id="PRO_0000133424" description="Protein E7">
    <location>
        <begin position="1"/>
        <end position="104"/>
    </location>
</feature>
<feature type="zinc finger region" evidence="1">
    <location>
        <begin position="65"/>
        <end position="101"/>
    </location>
</feature>
<feature type="region of interest" description="E7 terminal domain" evidence="1">
    <location>
        <begin position="1"/>
        <end position="47"/>
    </location>
</feature>
<feature type="short sequence motif" description="LXCXE motif; interaction with host RB1 and TMEM173/STING" evidence="1">
    <location>
        <begin position="23"/>
        <end position="27"/>
    </location>
</feature>
<feature type="short sequence motif" description="Nuclear export signal" evidence="1">
    <location>
        <begin position="83"/>
        <end position="91"/>
    </location>
</feature>
<evidence type="ECO:0000255" key="1">
    <source>
        <dbReference type="HAMAP-Rule" id="MF_04004"/>
    </source>
</evidence>
<keyword id="KW-0010">Activator</keyword>
<keyword id="KW-0238">DNA-binding</keyword>
<keyword id="KW-0244">Early protein</keyword>
<keyword id="KW-1078">G1/S host cell cycle checkpoint dysregulation by virus</keyword>
<keyword id="KW-1035">Host cytoplasm</keyword>
<keyword id="KW-1048">Host nucleus</keyword>
<keyword id="KW-0945">Host-virus interaction</keyword>
<keyword id="KW-1090">Inhibition of host innate immune response by virus</keyword>
<keyword id="KW-1114">Inhibition of host interferon signaling pathway by virus</keyword>
<keyword id="KW-0922">Interferon antiviral system evasion</keyword>
<keyword id="KW-0479">Metal-binding</keyword>
<keyword id="KW-1121">Modulation of host cell cycle by virus</keyword>
<keyword id="KW-0553">Oncogene</keyword>
<keyword id="KW-1185">Reference proteome</keyword>
<keyword id="KW-0804">Transcription</keyword>
<keyword id="KW-0805">Transcription regulation</keyword>
<keyword id="KW-0899">Viral immunoevasion</keyword>
<keyword id="KW-0862">Zinc</keyword>
<keyword id="KW-0863">Zinc-finger</keyword>
<dbReference type="EMBL" id="X74472">
    <property type="protein sequence ID" value="CAA52531.1"/>
    <property type="molecule type" value="Genomic_DNA"/>
</dbReference>
<dbReference type="PIR" id="S36545">
    <property type="entry name" value="S36545"/>
</dbReference>
<dbReference type="RefSeq" id="NP_041783.1">
    <property type="nucleotide sequence ID" value="NC_001583.1"/>
</dbReference>
<dbReference type="SMR" id="P36824"/>
<dbReference type="GeneID" id="1496947"/>
<dbReference type="KEGG" id="vg:1496947"/>
<dbReference type="OrthoDB" id="28045at10239"/>
<dbReference type="Proteomes" id="UP000009113">
    <property type="component" value="Genome"/>
</dbReference>
<dbReference type="GO" id="GO:0030430">
    <property type="term" value="C:host cell cytoplasm"/>
    <property type="evidence" value="ECO:0007669"/>
    <property type="project" value="UniProtKB-SubCell"/>
</dbReference>
<dbReference type="GO" id="GO:0042025">
    <property type="term" value="C:host cell nucleus"/>
    <property type="evidence" value="ECO:0007669"/>
    <property type="project" value="UniProtKB-SubCell"/>
</dbReference>
<dbReference type="GO" id="GO:0003677">
    <property type="term" value="F:DNA binding"/>
    <property type="evidence" value="ECO:0007669"/>
    <property type="project" value="UniProtKB-UniRule"/>
</dbReference>
<dbReference type="GO" id="GO:0003700">
    <property type="term" value="F:DNA-binding transcription factor activity"/>
    <property type="evidence" value="ECO:0007669"/>
    <property type="project" value="UniProtKB-UniRule"/>
</dbReference>
<dbReference type="GO" id="GO:0019904">
    <property type="term" value="F:protein domain specific binding"/>
    <property type="evidence" value="ECO:0007669"/>
    <property type="project" value="UniProtKB-UniRule"/>
</dbReference>
<dbReference type="GO" id="GO:0008270">
    <property type="term" value="F:zinc ion binding"/>
    <property type="evidence" value="ECO:0007669"/>
    <property type="project" value="UniProtKB-KW"/>
</dbReference>
<dbReference type="GO" id="GO:0006351">
    <property type="term" value="P:DNA-templated transcription"/>
    <property type="evidence" value="ECO:0007669"/>
    <property type="project" value="UniProtKB-UniRule"/>
</dbReference>
<dbReference type="GO" id="GO:0039645">
    <property type="term" value="P:symbiont-mediated perturbation of host cell cycle G1/S transition checkpoint"/>
    <property type="evidence" value="ECO:0007669"/>
    <property type="project" value="UniProtKB-UniRule"/>
</dbReference>
<dbReference type="GO" id="GO:0052170">
    <property type="term" value="P:symbiont-mediated suppression of host innate immune response"/>
    <property type="evidence" value="ECO:0007669"/>
    <property type="project" value="UniProtKB-KW"/>
</dbReference>
<dbReference type="GO" id="GO:0039502">
    <property type="term" value="P:symbiont-mediated suppression of host type I interferon-mediated signaling pathway"/>
    <property type="evidence" value="ECO:0007669"/>
    <property type="project" value="UniProtKB-UniRule"/>
</dbReference>
<dbReference type="Gene3D" id="3.30.160.330">
    <property type="match status" value="1"/>
</dbReference>
<dbReference type="HAMAP" id="MF_04004">
    <property type="entry name" value="PPV_E7"/>
    <property type="match status" value="1"/>
</dbReference>
<dbReference type="InterPro" id="IPR000148">
    <property type="entry name" value="Papilloma_E7"/>
</dbReference>
<dbReference type="Pfam" id="PF00527">
    <property type="entry name" value="E7"/>
    <property type="match status" value="1"/>
</dbReference>
<dbReference type="PIRSF" id="PIRSF003407">
    <property type="entry name" value="Papvi_E7"/>
    <property type="match status" value="1"/>
</dbReference>
<dbReference type="SUPFAM" id="SSF161234">
    <property type="entry name" value="E7 C-terminal domain-like"/>
    <property type="match status" value="1"/>
</dbReference>
<organismHost>
    <name type="scientific">Homo sapiens</name>
    <name type="common">Human</name>
    <dbReference type="NCBI Taxonomy" id="9606"/>
</organismHost>
<accession>P36824</accession>
<proteinExistence type="inferred from homology"/>
<name>VE7_HPV26</name>